<accession>C0PPR1</accession>
<accession>Q20HU8</accession>
<proteinExistence type="evidence at protein level"/>
<feature type="transit peptide" description="Chloroplast" evidence="3">
    <location>
        <begin position="1"/>
        <end position="21"/>
    </location>
</feature>
<feature type="chain" id="PRO_0000454414" description="(R)-linalool synthase 2, chloroplastic">
    <location>
        <begin position="22"/>
        <end position="626"/>
    </location>
</feature>
<feature type="short sequence motif" description="DDXXD motif" evidence="1">
    <location>
        <begin position="377"/>
        <end position="381"/>
    </location>
</feature>
<feature type="binding site" evidence="2">
    <location>
        <position position="377"/>
    </location>
    <ligand>
        <name>Mg(2+)</name>
        <dbReference type="ChEBI" id="CHEBI:18420"/>
        <label>1</label>
    </ligand>
</feature>
<feature type="binding site" evidence="2">
    <location>
        <position position="377"/>
    </location>
    <ligand>
        <name>Mg(2+)</name>
        <dbReference type="ChEBI" id="CHEBI:18420"/>
        <label>2</label>
    </ligand>
</feature>
<feature type="binding site" evidence="2">
    <location>
        <position position="381"/>
    </location>
    <ligand>
        <name>Mg(2+)</name>
        <dbReference type="ChEBI" id="CHEBI:18420"/>
        <label>1</label>
    </ligand>
</feature>
<feature type="binding site" evidence="2">
    <location>
        <position position="381"/>
    </location>
    <ligand>
        <name>Mg(2+)</name>
        <dbReference type="ChEBI" id="CHEBI:18420"/>
        <label>2</label>
    </ligand>
</feature>
<feature type="binding site" evidence="2">
    <location>
        <position position="529"/>
    </location>
    <ligand>
        <name>Mg(2+)</name>
        <dbReference type="ChEBI" id="CHEBI:18420"/>
        <label>3</label>
    </ligand>
</feature>
<feature type="sequence conflict" description="In Ref. 1; ABA86247." evidence="8" ref="1">
    <original>E</original>
    <variation>D</variation>
    <location>
        <position position="103"/>
    </location>
</feature>
<feature type="sequence conflict" description="In Ref. 1; ABA86247." evidence="8" ref="1">
    <original>N</original>
    <variation>K</variation>
    <location>
        <position position="201"/>
    </location>
</feature>
<feature type="sequence conflict" description="In Ref. 1; ABA86247." evidence="8" ref="1">
    <original>D</original>
    <variation>G</variation>
    <location>
        <position position="289"/>
    </location>
</feature>
<feature type="sequence conflict" description="In Ref. 1; ABA86247." evidence="8" ref="1">
    <original>Y</original>
    <variation>H</variation>
    <location>
        <position position="557"/>
    </location>
</feature>
<sequence>MAFVSIAPLASRCCVHKSFVSSREVKPLCRTIPTLGRCRRGKTVTPSISMCWTATVLDDGVQRRIANHHSNLWDDSFIQSLSTPYGETSYLERADKLIGEVKEIINSISVEDGELITPLNDLIQRLSIVDNIERLGIDRHFKNEIKSALDYVYSYWNEKGIGCGRESVITDLNSTALGLRTLRLHGYPVSSDVFEQFKEQNGQFACSAIQTEGEIKKVLNLFRASLIAFPGEKVMEEAEIFSTIYLKEALLKIPVCSLSREIAYVLEYGWHMNLPRLEARNYIDVFGQDPIYLTLNMRTQKLIELAKLEFNIFHSLQQEELKHVSRWWKDSGFSQMAYARHRHVEFYTLASCIAIDPQHSSFRLGFTKITYLGTVLDDIYDTFGTMDELELFTAAVKRWHPSAAEGLPEYMKGVYMMFYETVNEMAREAEKCQGRDTLNYARQALEAYIDSYMKEAKWISSGFLPTFEEYLDNGKVSFGYRIGTLQPILTLGIPFPHHILQEIDFPSRLNDLAGSILRLKGDIHSYQAERSRGEESSGISCYMKDNPESTEEDAVTYINAMINRLLKELNWEFLKPHSNVPITSKKHAFDILRAFYHLYKDRDGFSVTRNEIRNLVMTTVIEHVPL</sequence>
<reference key="1">
    <citation type="journal article" date="2006" name="Plant Physiol.">
        <title>Wound-induced terpene synthase gene expression in Sitka spruce that exhibit resistance or susceptibility to attack by the white pine weevil.</title>
        <authorList>
            <person name="Byun-McKay A."/>
            <person name="Godard K.-A."/>
            <person name="Toudefallah M."/>
            <person name="Martin D.M."/>
            <person name="Alfaro R."/>
            <person name="King J."/>
            <person name="Bohlmann J."/>
            <person name="Plant A.L."/>
        </authorList>
    </citation>
    <scope>NUCLEOTIDE SEQUENCE [MRNA]</scope>
    <scope>INDUCTION BY WOUNDING</scope>
</reference>
<reference key="2">
    <citation type="journal article" date="2008" name="BMC Genomics">
        <title>A conifer genomics resource of 200,000 spruce (Picea spp.) ESTs and 6,464 high-quality, sequence-finished full-length cDNAs for Sitka spruce (Picea sitchensis).</title>
        <authorList>
            <person name="Ralph S.G."/>
            <person name="Chun H.J.E."/>
            <person name="Kolosova N."/>
            <person name="Cooper D."/>
            <person name="Oddy C."/>
            <person name="Ritland C.E."/>
            <person name="Kirkpatrick R."/>
            <person name="Moore R."/>
            <person name="Barber S."/>
            <person name="Holt R.A."/>
            <person name="Jones S.J.M."/>
            <person name="Marra M.A."/>
            <person name="Douglas C.J."/>
            <person name="Ritland K."/>
            <person name="Bohlmann J."/>
        </authorList>
    </citation>
    <scope>NUCLEOTIDE SEQUENCE [LARGE SCALE MRNA]</scope>
    <source>
        <strain>cv. FB3-425</strain>
        <tissue>Green leaf</tissue>
    </source>
</reference>
<reference key="3">
    <citation type="journal article" date="2011" name="BMC Plant Biol.">
        <title>Transcriptome mining, functional characterization, and phylogeny of a large terpene synthase gene family in spruce (Picea spp.).</title>
        <authorList>
            <person name="Keeling C.I."/>
            <person name="Weisshaar S."/>
            <person name="Ralph S.G."/>
            <person name="Jancsik S."/>
            <person name="Hamberger B."/>
            <person name="Dullat H.K."/>
            <person name="Bohlmann J."/>
        </authorList>
    </citation>
    <scope>NUCLEOTIDE SEQUENCE [MRNA]</scope>
    <scope>CATALYTIC ACTIVITY</scope>
    <scope>FUNCTION</scope>
    <scope>PATHWAY</scope>
    <scope>GENE FAMILY</scope>
    <source>
        <strain>cv. FB3-425</strain>
    </source>
</reference>
<organism>
    <name type="scientific">Picea sitchensis</name>
    <name type="common">Sitka spruce</name>
    <name type="synonym">Pinus sitchensis</name>
    <dbReference type="NCBI Taxonomy" id="3332"/>
    <lineage>
        <taxon>Eukaryota</taxon>
        <taxon>Viridiplantae</taxon>
        <taxon>Streptophyta</taxon>
        <taxon>Embryophyta</taxon>
        <taxon>Tracheophyta</taxon>
        <taxon>Spermatophyta</taxon>
        <taxon>Pinopsida</taxon>
        <taxon>Pinidae</taxon>
        <taxon>Conifers I</taxon>
        <taxon>Pinales</taxon>
        <taxon>Pinaceae</taxon>
        <taxon>Picea</taxon>
    </lineage>
</organism>
<name>LLOS2_PICSI</name>
<keyword id="KW-0150">Chloroplast</keyword>
<keyword id="KW-0456">Lyase</keyword>
<keyword id="KW-0460">Magnesium</keyword>
<keyword id="KW-0479">Metal-binding</keyword>
<keyword id="KW-0934">Plastid</keyword>
<keyword id="KW-0809">Transit peptide</keyword>
<gene>
    <name evidence="7" type="primary">TPS-Lin-2</name>
    <name evidence="6" type="synonym">TPS-Linl</name>
</gene>
<protein>
    <recommendedName>
        <fullName evidence="7">(R)-linalool synthase 2, chloroplastic</fullName>
        <ecNumber evidence="5">4.2.3.26</ecNumber>
    </recommendedName>
    <alternativeName>
        <fullName evidence="7">Terpene synthase TPS-Lin 2</fullName>
        <shortName evidence="7">PsTPS-Lin-2</shortName>
        <shortName evidence="6">PsTPS-Linl</shortName>
    </alternativeName>
</protein>
<comment type="function">
    <text evidence="5">Terpene synthase (mono-TPS) involved in the biosynthesis of monoterpene natural products included in conifer oleoresin secretions and volatile emissions; these compounds contribute to biotic and abiotic stress defense against herbivores and pathogens (PubMed:21385377). Catalyzes the conversion of (2E)-geranyl diphosphate (GPP) to (R)-linalool (PubMed:21385377).</text>
</comment>
<comment type="catalytic activity">
    <reaction evidence="5">
        <text>(2E)-geranyl diphosphate + H2O = (R)-linalool + diphosphate</text>
        <dbReference type="Rhea" id="RHEA:15809"/>
        <dbReference type="ChEBI" id="CHEBI:28"/>
        <dbReference type="ChEBI" id="CHEBI:15377"/>
        <dbReference type="ChEBI" id="CHEBI:33019"/>
        <dbReference type="ChEBI" id="CHEBI:58057"/>
        <dbReference type="EC" id="4.2.3.26"/>
    </reaction>
</comment>
<comment type="cofactor">
    <cofactor evidence="1">
        <name>Mg(2+)</name>
        <dbReference type="ChEBI" id="CHEBI:18420"/>
    </cofactor>
    <cofactor evidence="1">
        <name>Mn(2+)</name>
        <dbReference type="ChEBI" id="CHEBI:29035"/>
    </cofactor>
    <text evidence="1">Binds 3 Mg(2+) or Mn(2+) ions per subunit.</text>
</comment>
<comment type="pathway">
    <text evidence="5">Terpene metabolism; oleoresin biosynthesis.</text>
</comment>
<comment type="subcellular location">
    <subcellularLocation>
        <location evidence="3">Plastid</location>
        <location evidence="3">Chloroplast</location>
    </subcellularLocation>
</comment>
<comment type="induction">
    <text evidence="4">Accumulates in apical leaders upon wounding in both resistant and susceptible to white pine weevil (Pissodes strobi) plants.</text>
</comment>
<comment type="domain">
    <text evidence="1">The Asp-Asp-Xaa-Xaa-Asp/Glu (DDXXD/E) motif is important for the catalytic activity, presumably through binding to Mg(2+).</text>
</comment>
<comment type="similarity">
    <text evidence="8">Belongs to the terpene synthase family. Tpsd subfamily.</text>
</comment>
<evidence type="ECO:0000250" key="1">
    <source>
        <dbReference type="UniProtKB" id="A0A1C9J6A7"/>
    </source>
</evidence>
<evidence type="ECO:0000250" key="2">
    <source>
        <dbReference type="UniProtKB" id="Q40577"/>
    </source>
</evidence>
<evidence type="ECO:0000255" key="3"/>
<evidence type="ECO:0000269" key="4">
    <source>
    </source>
</evidence>
<evidence type="ECO:0000269" key="5">
    <source>
    </source>
</evidence>
<evidence type="ECO:0000303" key="6">
    <source>
    </source>
</evidence>
<evidence type="ECO:0000303" key="7">
    <source>
    </source>
</evidence>
<evidence type="ECO:0000305" key="8"/>
<dbReference type="EC" id="4.2.3.26" evidence="5"/>
<dbReference type="EMBL" id="DQ195274">
    <property type="protein sequence ID" value="ABA86247.1"/>
    <property type="molecule type" value="mRNA"/>
</dbReference>
<dbReference type="EMBL" id="BT070282">
    <property type="protein sequence ID" value="ACN39801.1"/>
    <property type="molecule type" value="mRNA"/>
</dbReference>
<dbReference type="EMBL" id="HQ426168">
    <property type="protein sequence ID" value="ADZ45502.1"/>
    <property type="molecule type" value="mRNA"/>
</dbReference>
<dbReference type="SMR" id="C0PPR1"/>
<dbReference type="OMA" id="WDINTMA"/>
<dbReference type="UniPathway" id="UPA00924"/>
<dbReference type="GO" id="GO:0009507">
    <property type="term" value="C:chloroplast"/>
    <property type="evidence" value="ECO:0007669"/>
    <property type="project" value="UniProtKB-SubCell"/>
</dbReference>
<dbReference type="GO" id="GO:0016829">
    <property type="term" value="F:lyase activity"/>
    <property type="evidence" value="ECO:0000314"/>
    <property type="project" value="UniProtKB"/>
</dbReference>
<dbReference type="GO" id="GO:0000287">
    <property type="term" value="F:magnesium ion binding"/>
    <property type="evidence" value="ECO:0007669"/>
    <property type="project" value="InterPro"/>
</dbReference>
<dbReference type="GO" id="GO:0034008">
    <property type="term" value="F:R-linalool synthase activity"/>
    <property type="evidence" value="ECO:0000314"/>
    <property type="project" value="UniProtKB"/>
</dbReference>
<dbReference type="GO" id="GO:0010333">
    <property type="term" value="F:terpene synthase activity"/>
    <property type="evidence" value="ECO:0007669"/>
    <property type="project" value="InterPro"/>
</dbReference>
<dbReference type="GO" id="GO:0016102">
    <property type="term" value="P:diterpenoid biosynthetic process"/>
    <property type="evidence" value="ECO:0007669"/>
    <property type="project" value="InterPro"/>
</dbReference>
<dbReference type="GO" id="GO:0010597">
    <property type="term" value="P:green leaf volatile biosynthetic process"/>
    <property type="evidence" value="ECO:0000314"/>
    <property type="project" value="UniProtKB"/>
</dbReference>
<dbReference type="GO" id="GO:0016099">
    <property type="term" value="P:monoterpenoid biosynthetic process"/>
    <property type="evidence" value="ECO:0000314"/>
    <property type="project" value="UniProtKB"/>
</dbReference>
<dbReference type="GO" id="GO:0009611">
    <property type="term" value="P:response to wounding"/>
    <property type="evidence" value="ECO:0000270"/>
    <property type="project" value="UniProtKB"/>
</dbReference>
<dbReference type="CDD" id="cd00684">
    <property type="entry name" value="Terpene_cyclase_plant_C1"/>
    <property type="match status" value="1"/>
</dbReference>
<dbReference type="FunFam" id="1.50.10.130:FF:000004">
    <property type="entry name" value="Carene synthase, chloroplastic"/>
    <property type="match status" value="1"/>
</dbReference>
<dbReference type="FunFam" id="1.10.600.10:FF:000005">
    <property type="entry name" value="Ent-kaur-16-ene synthase, chloroplastic"/>
    <property type="match status" value="1"/>
</dbReference>
<dbReference type="Gene3D" id="1.10.600.10">
    <property type="entry name" value="Farnesyl Diphosphate Synthase"/>
    <property type="match status" value="1"/>
</dbReference>
<dbReference type="Gene3D" id="1.50.10.130">
    <property type="entry name" value="Terpene synthase, N-terminal domain"/>
    <property type="match status" value="1"/>
</dbReference>
<dbReference type="InterPro" id="IPR008949">
    <property type="entry name" value="Isoprenoid_synthase_dom_sf"/>
</dbReference>
<dbReference type="InterPro" id="IPR034741">
    <property type="entry name" value="Terpene_cyclase-like_1_C"/>
</dbReference>
<dbReference type="InterPro" id="IPR044814">
    <property type="entry name" value="Terpene_cyclase_plant_C1"/>
</dbReference>
<dbReference type="InterPro" id="IPR001906">
    <property type="entry name" value="Terpene_synth_N"/>
</dbReference>
<dbReference type="InterPro" id="IPR036965">
    <property type="entry name" value="Terpene_synth_N_sf"/>
</dbReference>
<dbReference type="InterPro" id="IPR050148">
    <property type="entry name" value="Terpene_synthase-like"/>
</dbReference>
<dbReference type="InterPro" id="IPR005630">
    <property type="entry name" value="Terpene_synthase_metal-bd"/>
</dbReference>
<dbReference type="InterPro" id="IPR008930">
    <property type="entry name" value="Terpenoid_cyclase/PrenylTrfase"/>
</dbReference>
<dbReference type="PANTHER" id="PTHR31225">
    <property type="entry name" value="OS04G0344100 PROTEIN-RELATED"/>
    <property type="match status" value="1"/>
</dbReference>
<dbReference type="Pfam" id="PF01397">
    <property type="entry name" value="Terpene_synth"/>
    <property type="match status" value="1"/>
</dbReference>
<dbReference type="Pfam" id="PF03936">
    <property type="entry name" value="Terpene_synth_C"/>
    <property type="match status" value="1"/>
</dbReference>
<dbReference type="SFLD" id="SFLDS00005">
    <property type="entry name" value="Isoprenoid_Synthase_Type_I"/>
    <property type="match status" value="1"/>
</dbReference>
<dbReference type="SFLD" id="SFLDG01019">
    <property type="entry name" value="Terpene_Cyclase_Like_1_C_Termi"/>
    <property type="match status" value="1"/>
</dbReference>
<dbReference type="SFLD" id="SFLDG01014">
    <property type="entry name" value="Terpene_Cyclase_Like_1_N-term"/>
    <property type="match status" value="1"/>
</dbReference>
<dbReference type="SUPFAM" id="SSF48239">
    <property type="entry name" value="Terpenoid cyclases/Protein prenyltransferases"/>
    <property type="match status" value="1"/>
</dbReference>
<dbReference type="SUPFAM" id="SSF48576">
    <property type="entry name" value="Terpenoid synthases"/>
    <property type="match status" value="1"/>
</dbReference>